<sequence>MIPGELLPQDGDLELNAGRPTVTVTVANTGDRPVQIGSHYHFYEVNDALRFDREAARGFRLNIAAGTAVRFEPGQERTVELVALAGDRVVYGFAGRVMGKL</sequence>
<dbReference type="EC" id="3.5.1.5" evidence="1"/>
<dbReference type="EMBL" id="CP001068">
    <property type="protein sequence ID" value="ACD27319.1"/>
    <property type="molecule type" value="Genomic_DNA"/>
</dbReference>
<dbReference type="SMR" id="B2U7N2"/>
<dbReference type="STRING" id="402626.Rpic_2185"/>
<dbReference type="KEGG" id="rpi:Rpic_2185"/>
<dbReference type="eggNOG" id="COG0832">
    <property type="taxonomic scope" value="Bacteria"/>
</dbReference>
<dbReference type="HOGENOM" id="CLU_129707_1_1_4"/>
<dbReference type="UniPathway" id="UPA00258">
    <property type="reaction ID" value="UER00370"/>
</dbReference>
<dbReference type="GO" id="GO:0035550">
    <property type="term" value="C:urease complex"/>
    <property type="evidence" value="ECO:0007669"/>
    <property type="project" value="InterPro"/>
</dbReference>
<dbReference type="GO" id="GO:0009039">
    <property type="term" value="F:urease activity"/>
    <property type="evidence" value="ECO:0007669"/>
    <property type="project" value="UniProtKB-UniRule"/>
</dbReference>
<dbReference type="GO" id="GO:0043419">
    <property type="term" value="P:urea catabolic process"/>
    <property type="evidence" value="ECO:0007669"/>
    <property type="project" value="UniProtKB-UniRule"/>
</dbReference>
<dbReference type="CDD" id="cd00407">
    <property type="entry name" value="Urease_beta"/>
    <property type="match status" value="1"/>
</dbReference>
<dbReference type="FunFam" id="2.10.150.10:FF:000001">
    <property type="entry name" value="Urease subunit beta"/>
    <property type="match status" value="1"/>
</dbReference>
<dbReference type="Gene3D" id="2.10.150.10">
    <property type="entry name" value="Urease, beta subunit"/>
    <property type="match status" value="1"/>
</dbReference>
<dbReference type="HAMAP" id="MF_01954">
    <property type="entry name" value="Urease_beta"/>
    <property type="match status" value="1"/>
</dbReference>
<dbReference type="InterPro" id="IPR002019">
    <property type="entry name" value="Urease_beta-like"/>
</dbReference>
<dbReference type="InterPro" id="IPR036461">
    <property type="entry name" value="Urease_betasu_sf"/>
</dbReference>
<dbReference type="InterPro" id="IPR050069">
    <property type="entry name" value="Urease_subunit"/>
</dbReference>
<dbReference type="NCBIfam" id="NF009682">
    <property type="entry name" value="PRK13203.1"/>
    <property type="match status" value="1"/>
</dbReference>
<dbReference type="NCBIfam" id="TIGR00192">
    <property type="entry name" value="urease_beta"/>
    <property type="match status" value="1"/>
</dbReference>
<dbReference type="PANTHER" id="PTHR33569">
    <property type="entry name" value="UREASE"/>
    <property type="match status" value="1"/>
</dbReference>
<dbReference type="PANTHER" id="PTHR33569:SF1">
    <property type="entry name" value="UREASE"/>
    <property type="match status" value="1"/>
</dbReference>
<dbReference type="Pfam" id="PF00699">
    <property type="entry name" value="Urease_beta"/>
    <property type="match status" value="1"/>
</dbReference>
<dbReference type="SUPFAM" id="SSF51278">
    <property type="entry name" value="Urease, beta-subunit"/>
    <property type="match status" value="1"/>
</dbReference>
<keyword id="KW-0963">Cytoplasm</keyword>
<keyword id="KW-0378">Hydrolase</keyword>
<reference key="1">
    <citation type="submission" date="2008-05" db="EMBL/GenBank/DDBJ databases">
        <title>Complete sequence of chromosome 1 of Ralstonia pickettii 12J.</title>
        <authorList>
            <person name="Lucas S."/>
            <person name="Copeland A."/>
            <person name="Lapidus A."/>
            <person name="Glavina del Rio T."/>
            <person name="Dalin E."/>
            <person name="Tice H."/>
            <person name="Bruce D."/>
            <person name="Goodwin L."/>
            <person name="Pitluck S."/>
            <person name="Meincke L."/>
            <person name="Brettin T."/>
            <person name="Detter J.C."/>
            <person name="Han C."/>
            <person name="Kuske C.R."/>
            <person name="Schmutz J."/>
            <person name="Larimer F."/>
            <person name="Land M."/>
            <person name="Hauser L."/>
            <person name="Kyrpides N."/>
            <person name="Mikhailova N."/>
            <person name="Marsh T."/>
            <person name="Richardson P."/>
        </authorList>
    </citation>
    <scope>NUCLEOTIDE SEQUENCE [LARGE SCALE GENOMIC DNA]</scope>
    <source>
        <strain>12J</strain>
    </source>
</reference>
<proteinExistence type="inferred from homology"/>
<name>URE2_RALPJ</name>
<comment type="catalytic activity">
    <reaction evidence="1">
        <text>urea + 2 H2O + H(+) = hydrogencarbonate + 2 NH4(+)</text>
        <dbReference type="Rhea" id="RHEA:20557"/>
        <dbReference type="ChEBI" id="CHEBI:15377"/>
        <dbReference type="ChEBI" id="CHEBI:15378"/>
        <dbReference type="ChEBI" id="CHEBI:16199"/>
        <dbReference type="ChEBI" id="CHEBI:17544"/>
        <dbReference type="ChEBI" id="CHEBI:28938"/>
        <dbReference type="EC" id="3.5.1.5"/>
    </reaction>
</comment>
<comment type="pathway">
    <text evidence="1">Nitrogen metabolism; urea degradation; CO(2) and NH(3) from urea (urease route): step 1/1.</text>
</comment>
<comment type="subunit">
    <text evidence="1">Heterotrimer of UreA (gamma), UreB (beta) and UreC (alpha) subunits. Three heterotrimers associate to form the active enzyme.</text>
</comment>
<comment type="subcellular location">
    <subcellularLocation>
        <location evidence="1">Cytoplasm</location>
    </subcellularLocation>
</comment>
<comment type="similarity">
    <text evidence="1">Belongs to the urease beta subunit family.</text>
</comment>
<evidence type="ECO:0000255" key="1">
    <source>
        <dbReference type="HAMAP-Rule" id="MF_01954"/>
    </source>
</evidence>
<feature type="chain" id="PRO_1000188936" description="Urease subunit beta">
    <location>
        <begin position="1"/>
        <end position="101"/>
    </location>
</feature>
<gene>
    <name evidence="1" type="primary">ureB</name>
    <name type="ordered locus">Rpic_2185</name>
</gene>
<organism>
    <name type="scientific">Ralstonia pickettii (strain 12J)</name>
    <dbReference type="NCBI Taxonomy" id="402626"/>
    <lineage>
        <taxon>Bacteria</taxon>
        <taxon>Pseudomonadati</taxon>
        <taxon>Pseudomonadota</taxon>
        <taxon>Betaproteobacteria</taxon>
        <taxon>Burkholderiales</taxon>
        <taxon>Burkholderiaceae</taxon>
        <taxon>Ralstonia</taxon>
    </lineage>
</organism>
<accession>B2U7N2</accession>
<protein>
    <recommendedName>
        <fullName evidence="1">Urease subunit beta</fullName>
        <ecNumber evidence="1">3.5.1.5</ecNumber>
    </recommendedName>
    <alternativeName>
        <fullName evidence="1">Urea amidohydrolase subunit beta</fullName>
    </alternativeName>
</protein>